<feature type="chain" id="PRO_1000136060" description="Glycerol-3-phosphate acyltransferase">
    <location>
        <begin position="1"/>
        <end position="196"/>
    </location>
</feature>
<feature type="transmembrane region" description="Helical" evidence="1">
    <location>
        <begin position="5"/>
        <end position="25"/>
    </location>
</feature>
<feature type="transmembrane region" description="Helical" evidence="1">
    <location>
        <begin position="53"/>
        <end position="73"/>
    </location>
</feature>
<feature type="transmembrane region" description="Helical" evidence="1">
    <location>
        <begin position="80"/>
        <end position="100"/>
    </location>
</feature>
<feature type="transmembrane region" description="Helical" evidence="1">
    <location>
        <begin position="107"/>
        <end position="127"/>
    </location>
</feature>
<feature type="transmembrane region" description="Helical" evidence="1">
    <location>
        <begin position="130"/>
        <end position="150"/>
    </location>
</feature>
<feature type="transmembrane region" description="Helical" evidence="1">
    <location>
        <begin position="153"/>
        <end position="173"/>
    </location>
</feature>
<keyword id="KW-0997">Cell inner membrane</keyword>
<keyword id="KW-1003">Cell membrane</keyword>
<keyword id="KW-0444">Lipid biosynthesis</keyword>
<keyword id="KW-0443">Lipid metabolism</keyword>
<keyword id="KW-0472">Membrane</keyword>
<keyword id="KW-0594">Phospholipid biosynthesis</keyword>
<keyword id="KW-1208">Phospholipid metabolism</keyword>
<keyword id="KW-0808">Transferase</keyword>
<keyword id="KW-0812">Transmembrane</keyword>
<keyword id="KW-1133">Transmembrane helix</keyword>
<proteinExistence type="inferred from homology"/>
<protein>
    <recommendedName>
        <fullName evidence="1">Glycerol-3-phosphate acyltransferase</fullName>
    </recommendedName>
    <alternativeName>
        <fullName evidence="1">Acyl-PO4 G3P acyltransferase</fullName>
    </alternativeName>
    <alternativeName>
        <fullName evidence="1">Acyl-phosphate--glycerol-3-phosphate acyltransferase</fullName>
    </alternativeName>
    <alternativeName>
        <fullName evidence="1">G3P acyltransferase</fullName>
        <shortName evidence="1">GPAT</shortName>
        <ecNumber evidence="1">2.3.1.275</ecNumber>
    </alternativeName>
    <alternativeName>
        <fullName evidence="1">Lysophosphatidic acid synthase</fullName>
        <shortName evidence="1">LPA synthase</shortName>
    </alternativeName>
</protein>
<accession>B0BQT0</accession>
<organism>
    <name type="scientific">Actinobacillus pleuropneumoniae serotype 3 (strain JL03)</name>
    <dbReference type="NCBI Taxonomy" id="434271"/>
    <lineage>
        <taxon>Bacteria</taxon>
        <taxon>Pseudomonadati</taxon>
        <taxon>Pseudomonadota</taxon>
        <taxon>Gammaproteobacteria</taxon>
        <taxon>Pasteurellales</taxon>
        <taxon>Pasteurellaceae</taxon>
        <taxon>Actinobacillus</taxon>
    </lineage>
</organism>
<dbReference type="EC" id="2.3.1.275" evidence="1"/>
<dbReference type="EMBL" id="CP000687">
    <property type="protein sequence ID" value="ABY69915.1"/>
    <property type="molecule type" value="Genomic_DNA"/>
</dbReference>
<dbReference type="RefSeq" id="WP_005598446.1">
    <property type="nucleotide sequence ID" value="NC_010278.1"/>
</dbReference>
<dbReference type="SMR" id="B0BQT0"/>
<dbReference type="GeneID" id="48599592"/>
<dbReference type="KEGG" id="apj:APJL_1359"/>
<dbReference type="HOGENOM" id="CLU_081254_0_2_6"/>
<dbReference type="UniPathway" id="UPA00085"/>
<dbReference type="Proteomes" id="UP000008547">
    <property type="component" value="Chromosome"/>
</dbReference>
<dbReference type="GO" id="GO:0005886">
    <property type="term" value="C:plasma membrane"/>
    <property type="evidence" value="ECO:0007669"/>
    <property type="project" value="UniProtKB-SubCell"/>
</dbReference>
<dbReference type="GO" id="GO:0043772">
    <property type="term" value="F:acyl-phosphate glycerol-3-phosphate acyltransferase activity"/>
    <property type="evidence" value="ECO:0007669"/>
    <property type="project" value="UniProtKB-UniRule"/>
</dbReference>
<dbReference type="GO" id="GO:0008654">
    <property type="term" value="P:phospholipid biosynthetic process"/>
    <property type="evidence" value="ECO:0007669"/>
    <property type="project" value="UniProtKB-UniRule"/>
</dbReference>
<dbReference type="HAMAP" id="MF_01043">
    <property type="entry name" value="PlsY"/>
    <property type="match status" value="1"/>
</dbReference>
<dbReference type="InterPro" id="IPR003811">
    <property type="entry name" value="G3P_acylTferase_PlsY"/>
</dbReference>
<dbReference type="NCBIfam" id="TIGR00023">
    <property type="entry name" value="glycerol-3-phosphate 1-O-acyltransferase PlsY"/>
    <property type="match status" value="1"/>
</dbReference>
<dbReference type="PANTHER" id="PTHR30309:SF0">
    <property type="entry name" value="GLYCEROL-3-PHOSPHATE ACYLTRANSFERASE-RELATED"/>
    <property type="match status" value="1"/>
</dbReference>
<dbReference type="PANTHER" id="PTHR30309">
    <property type="entry name" value="INNER MEMBRANE PROTEIN YGIH"/>
    <property type="match status" value="1"/>
</dbReference>
<dbReference type="Pfam" id="PF02660">
    <property type="entry name" value="G3P_acyltransf"/>
    <property type="match status" value="1"/>
</dbReference>
<dbReference type="SMART" id="SM01207">
    <property type="entry name" value="G3P_acyltransf"/>
    <property type="match status" value="1"/>
</dbReference>
<comment type="function">
    <text evidence="1">Catalyzes the transfer of an acyl group from acyl-phosphate (acyl-PO(4)) to glycerol-3-phosphate (G3P) to form lysophosphatidic acid (LPA). This enzyme utilizes acyl-phosphate as fatty acyl donor, but not acyl-CoA or acyl-ACP.</text>
</comment>
<comment type="catalytic activity">
    <reaction evidence="1">
        <text>an acyl phosphate + sn-glycerol 3-phosphate = a 1-acyl-sn-glycero-3-phosphate + phosphate</text>
        <dbReference type="Rhea" id="RHEA:34075"/>
        <dbReference type="ChEBI" id="CHEBI:43474"/>
        <dbReference type="ChEBI" id="CHEBI:57597"/>
        <dbReference type="ChEBI" id="CHEBI:57970"/>
        <dbReference type="ChEBI" id="CHEBI:59918"/>
        <dbReference type="EC" id="2.3.1.275"/>
    </reaction>
</comment>
<comment type="pathway">
    <text evidence="1">Lipid metabolism; phospholipid metabolism.</text>
</comment>
<comment type="subunit">
    <text evidence="1">Probably interacts with PlsX.</text>
</comment>
<comment type="subcellular location">
    <subcellularLocation>
        <location evidence="1">Cell inner membrane</location>
        <topology evidence="1">Multi-pass membrane protein</topology>
    </subcellularLocation>
</comment>
<comment type="similarity">
    <text evidence="1">Belongs to the PlsY family.</text>
</comment>
<sequence>MSITVYLLIVFAYLLGSVSSAIIFCRLAGLPDPRENGSHNPGATNVLRIGGKFSALGVLLFDILKGGLPVLLAFNFKLEPSEIGLIALAACLGHIFPLFFRFRGGKGVATAFGALLSISFAASAAGLCTWLIVFLLFGYSSLSAVITALIMPFYIWWFLPEFTFPVALVCCLLVYRHHDNIQRLWRGQEQPMWARK</sequence>
<gene>
    <name evidence="1" type="primary">plsY</name>
    <name type="ordered locus">APJL_1359</name>
</gene>
<evidence type="ECO:0000255" key="1">
    <source>
        <dbReference type="HAMAP-Rule" id="MF_01043"/>
    </source>
</evidence>
<name>PLSY_ACTPJ</name>
<reference key="1">
    <citation type="journal article" date="2008" name="PLoS ONE">
        <title>Genome biology of Actinobacillus pleuropneumoniae JL03, an isolate of serotype 3 prevalent in China.</title>
        <authorList>
            <person name="Xu Z."/>
            <person name="Zhou Y."/>
            <person name="Li L."/>
            <person name="Zhou R."/>
            <person name="Xiao S."/>
            <person name="Wan Y."/>
            <person name="Zhang S."/>
            <person name="Wang K."/>
            <person name="Li W."/>
            <person name="Li L."/>
            <person name="Jin H."/>
            <person name="Kang M."/>
            <person name="Dalai B."/>
            <person name="Li T."/>
            <person name="Liu L."/>
            <person name="Cheng Y."/>
            <person name="Zhang L."/>
            <person name="Xu T."/>
            <person name="Zheng H."/>
            <person name="Pu S."/>
            <person name="Wang B."/>
            <person name="Gu W."/>
            <person name="Zhang X.L."/>
            <person name="Zhu G.-F."/>
            <person name="Wang S."/>
            <person name="Zhao G.-P."/>
            <person name="Chen H."/>
        </authorList>
    </citation>
    <scope>NUCLEOTIDE SEQUENCE [LARGE SCALE GENOMIC DNA]</scope>
    <source>
        <strain>JL03</strain>
    </source>
</reference>